<reference key="1">
    <citation type="journal article" date="2011" name="J. Bacteriol.">
        <title>Comparative genomics of 28 Salmonella enterica isolates: evidence for CRISPR-mediated adaptive sublineage evolution.</title>
        <authorList>
            <person name="Fricke W.F."/>
            <person name="Mammel M.K."/>
            <person name="McDermott P.F."/>
            <person name="Tartera C."/>
            <person name="White D.G."/>
            <person name="Leclerc J.E."/>
            <person name="Ravel J."/>
            <person name="Cebula T.A."/>
        </authorList>
    </citation>
    <scope>NUCLEOTIDE SEQUENCE [LARGE SCALE GENOMIC DNA]</scope>
    <source>
        <strain>CVM19633</strain>
    </source>
</reference>
<proteinExistence type="inferred from homology"/>
<dbReference type="EMBL" id="CP001127">
    <property type="protein sequence ID" value="ACF91334.1"/>
    <property type="molecule type" value="Genomic_DNA"/>
</dbReference>
<dbReference type="RefSeq" id="WP_001295377.1">
    <property type="nucleotide sequence ID" value="NC_011094.1"/>
</dbReference>
<dbReference type="SMR" id="B4TV23"/>
<dbReference type="GeneID" id="93779098"/>
<dbReference type="KEGG" id="sew:SeSA_A3224"/>
<dbReference type="HOGENOM" id="CLU_097408_2_1_6"/>
<dbReference type="Proteomes" id="UP000001865">
    <property type="component" value="Chromosome"/>
</dbReference>
<dbReference type="GO" id="GO:0005829">
    <property type="term" value="C:cytosol"/>
    <property type="evidence" value="ECO:0007669"/>
    <property type="project" value="TreeGrafter"/>
</dbReference>
<dbReference type="GO" id="GO:0005960">
    <property type="term" value="C:glycine cleavage complex"/>
    <property type="evidence" value="ECO:0007669"/>
    <property type="project" value="InterPro"/>
</dbReference>
<dbReference type="GO" id="GO:0019464">
    <property type="term" value="P:glycine decarboxylation via glycine cleavage system"/>
    <property type="evidence" value="ECO:0007669"/>
    <property type="project" value="UniProtKB-UniRule"/>
</dbReference>
<dbReference type="CDD" id="cd06848">
    <property type="entry name" value="GCS_H"/>
    <property type="match status" value="1"/>
</dbReference>
<dbReference type="FunFam" id="2.40.50.100:FF:000011">
    <property type="entry name" value="Glycine cleavage system H protein"/>
    <property type="match status" value="1"/>
</dbReference>
<dbReference type="Gene3D" id="2.40.50.100">
    <property type="match status" value="1"/>
</dbReference>
<dbReference type="HAMAP" id="MF_00272">
    <property type="entry name" value="GcvH"/>
    <property type="match status" value="1"/>
</dbReference>
<dbReference type="InterPro" id="IPR003016">
    <property type="entry name" value="2-oxoA_DH_lipoyl-BS"/>
</dbReference>
<dbReference type="InterPro" id="IPR000089">
    <property type="entry name" value="Biotin_lipoyl"/>
</dbReference>
<dbReference type="InterPro" id="IPR002930">
    <property type="entry name" value="GCV_H"/>
</dbReference>
<dbReference type="InterPro" id="IPR033753">
    <property type="entry name" value="GCV_H/Fam206"/>
</dbReference>
<dbReference type="InterPro" id="IPR017453">
    <property type="entry name" value="GCV_H_sub"/>
</dbReference>
<dbReference type="InterPro" id="IPR011053">
    <property type="entry name" value="Single_hybrid_motif"/>
</dbReference>
<dbReference type="NCBIfam" id="TIGR00527">
    <property type="entry name" value="gcvH"/>
    <property type="match status" value="1"/>
</dbReference>
<dbReference type="NCBIfam" id="NF002270">
    <property type="entry name" value="PRK01202.1"/>
    <property type="match status" value="1"/>
</dbReference>
<dbReference type="PANTHER" id="PTHR11715">
    <property type="entry name" value="GLYCINE CLEAVAGE SYSTEM H PROTEIN"/>
    <property type="match status" value="1"/>
</dbReference>
<dbReference type="PANTHER" id="PTHR11715:SF3">
    <property type="entry name" value="GLYCINE CLEAVAGE SYSTEM H PROTEIN-RELATED"/>
    <property type="match status" value="1"/>
</dbReference>
<dbReference type="Pfam" id="PF01597">
    <property type="entry name" value="GCV_H"/>
    <property type="match status" value="1"/>
</dbReference>
<dbReference type="SUPFAM" id="SSF51230">
    <property type="entry name" value="Single hybrid motif"/>
    <property type="match status" value="1"/>
</dbReference>
<dbReference type="PROSITE" id="PS50968">
    <property type="entry name" value="BIOTINYL_LIPOYL"/>
    <property type="match status" value="1"/>
</dbReference>
<dbReference type="PROSITE" id="PS00189">
    <property type="entry name" value="LIPOYL"/>
    <property type="match status" value="1"/>
</dbReference>
<keyword id="KW-0450">Lipoyl</keyword>
<protein>
    <recommendedName>
        <fullName evidence="1">Glycine cleavage system H protein</fullName>
    </recommendedName>
</protein>
<accession>B4TV23</accession>
<comment type="function">
    <text evidence="1">The glycine cleavage system catalyzes the degradation of glycine. The H protein shuttles the methylamine group of glycine from the P protein to the T protein.</text>
</comment>
<comment type="cofactor">
    <cofactor evidence="1">
        <name>(R)-lipoate</name>
        <dbReference type="ChEBI" id="CHEBI:83088"/>
    </cofactor>
    <text evidence="1">Binds 1 lipoyl cofactor covalently.</text>
</comment>
<comment type="subunit">
    <text evidence="1">The glycine cleavage system is composed of four proteins: P, T, L and H.</text>
</comment>
<comment type="similarity">
    <text evidence="1">Belongs to the GcvH family.</text>
</comment>
<gene>
    <name evidence="1" type="primary">gcvH</name>
    <name type="ordered locus">SeSA_A3224</name>
</gene>
<sequence length="129" mass="13811">MSNVPAELKYSKEHEWLRKEADGTYTVGITEHAQELLGDMVFVDLPEVGATVSAGDDCAVAESVKAASDIYAPVSGEIVAVNDALSDSPELVNSEPYAGGWIFKIKASDESELESLLDATAYEALLEDE</sequence>
<evidence type="ECO:0000255" key="1">
    <source>
        <dbReference type="HAMAP-Rule" id="MF_00272"/>
    </source>
</evidence>
<evidence type="ECO:0000255" key="2">
    <source>
        <dbReference type="PROSITE-ProRule" id="PRU01066"/>
    </source>
</evidence>
<organism>
    <name type="scientific">Salmonella schwarzengrund (strain CVM19633)</name>
    <dbReference type="NCBI Taxonomy" id="439843"/>
    <lineage>
        <taxon>Bacteria</taxon>
        <taxon>Pseudomonadati</taxon>
        <taxon>Pseudomonadota</taxon>
        <taxon>Gammaproteobacteria</taxon>
        <taxon>Enterobacterales</taxon>
        <taxon>Enterobacteriaceae</taxon>
        <taxon>Salmonella</taxon>
    </lineage>
</organism>
<name>GCSH_SALSV</name>
<feature type="chain" id="PRO_1000114550" description="Glycine cleavage system H protein">
    <location>
        <begin position="1"/>
        <end position="129"/>
    </location>
</feature>
<feature type="domain" description="Lipoyl-binding" evidence="2">
    <location>
        <begin position="24"/>
        <end position="106"/>
    </location>
</feature>
<feature type="modified residue" description="N6-lipoyllysine" evidence="1">
    <location>
        <position position="65"/>
    </location>
</feature>